<organism>
    <name type="scientific">Chironomus tentans</name>
    <name type="common">Midge</name>
    <name type="synonym">Camptochironomus tentans</name>
    <dbReference type="NCBI Taxonomy" id="7153"/>
    <lineage>
        <taxon>Eukaryota</taxon>
        <taxon>Metazoa</taxon>
        <taxon>Ecdysozoa</taxon>
        <taxon>Arthropoda</taxon>
        <taxon>Hexapoda</taxon>
        <taxon>Insecta</taxon>
        <taxon>Pterygota</taxon>
        <taxon>Neoptera</taxon>
        <taxon>Endopterygota</taxon>
        <taxon>Diptera</taxon>
        <taxon>Nematocera</taxon>
        <taxon>Chironomoidea</taxon>
        <taxon>Chironomidae</taxon>
        <taxon>Chironominae</taxon>
        <taxon>Chironomus</taxon>
    </lineage>
</organism>
<accession>Q05018</accession>
<protein>
    <recommendedName>
        <fullName>Salivary gland SP38-40.A protein</fullName>
    </recommendedName>
</protein>
<proteinExistence type="evidence at transcript level"/>
<sequence length="244" mass="27374">MRIKFLVVLAVICLFAHYASASGMGGDKKPKDAPKPKDAPKPKEVKPVKAESSEYEIEVIKHQKEKTEKKEKEKKTHVETKKEVKKKEKKQIPCSEKLKDEKLDCETKGVPAGYKAIFKFTENEECDWTCDYEALPPPPGAKKDDKKEKKTVKVVKPPKEKPPKKLRKECSGEKVIKFQNCLVKIRGLIAFGDKTKNFDKKFAKLVQGKQKKGAKKAKGGKKAAPKPGPKPGPKQADKPKDAKK</sequence>
<dbReference type="EMBL" id="X70063">
    <property type="protein sequence ID" value="CAA49667.1"/>
    <property type="molecule type" value="Genomic_DNA"/>
</dbReference>
<dbReference type="PIR" id="S33819">
    <property type="entry name" value="S33819"/>
</dbReference>
<dbReference type="GO" id="GO:0005576">
    <property type="term" value="C:extracellular region"/>
    <property type="evidence" value="ECO:0007669"/>
    <property type="project" value="UniProtKB-SubCell"/>
</dbReference>
<evidence type="ECO:0000255" key="1"/>
<evidence type="ECO:0000256" key="2">
    <source>
        <dbReference type="SAM" id="MobiDB-lite"/>
    </source>
</evidence>
<comment type="function">
    <text>Used by the larvae to construct a supramolecular structure, the larval tube.</text>
</comment>
<comment type="subcellular location">
    <subcellularLocation>
        <location>Secreted</location>
    </subcellularLocation>
</comment>
<comment type="tissue specificity">
    <text>Salivary gland.</text>
</comment>
<comment type="developmental stage">
    <text>Expression of the SP38-40.a and B genes are different: the A gene is expressed throughout the larval fourth instar but considerably less in the prepupal stage, while the B gene shows the opposite expression pattern.</text>
</comment>
<reference key="1">
    <citation type="journal article" date="1993" name="J. Mol. Biol.">
        <title>Two secretory protein genes in Chironomus tentans have arisen by gene duplication and exhibit different developmental expression patterns.</title>
        <authorList>
            <person name="Galli J."/>
            <person name="Wieslander L."/>
        </authorList>
    </citation>
    <scope>NUCLEOTIDE SEQUENCE [GENOMIC DNA]</scope>
</reference>
<feature type="signal peptide" evidence="1">
    <location>
        <begin position="1"/>
        <end position="21"/>
    </location>
</feature>
<feature type="chain" id="PRO_0000022263" description="Salivary gland SP38-40.A protein">
    <location>
        <begin position="22"/>
        <end position="244"/>
    </location>
</feature>
<feature type="repeat" description="1-1">
    <location>
        <begin position="29"/>
        <end position="34"/>
    </location>
</feature>
<feature type="repeat" description="1-2">
    <location>
        <begin position="35"/>
        <end position="40"/>
    </location>
</feature>
<feature type="repeat" description="1-3; approximate">
    <location>
        <begin position="41"/>
        <end position="47"/>
    </location>
</feature>
<feature type="repeat" description="2-1">
    <location>
        <begin position="156"/>
        <end position="159"/>
    </location>
</feature>
<feature type="repeat" description="2-2">
    <location>
        <begin position="161"/>
        <end position="164"/>
    </location>
</feature>
<feature type="repeat" description="2-3; approximate">
    <location>
        <begin position="165"/>
        <end position="168"/>
    </location>
</feature>
<feature type="repeat" description="3-1">
    <location>
        <begin position="225"/>
        <end position="228"/>
    </location>
</feature>
<feature type="repeat" description="3-2">
    <location>
        <begin position="229"/>
        <end position="232"/>
    </location>
</feature>
<feature type="repeat" description="3-3">
    <location>
        <begin position="233"/>
        <end position="236"/>
    </location>
</feature>
<feature type="repeat" description="3-4; approximate">
    <location>
        <begin position="237"/>
        <end position="240"/>
    </location>
</feature>
<feature type="region of interest" description="Disordered" evidence="2">
    <location>
        <begin position="23"/>
        <end position="91"/>
    </location>
</feature>
<feature type="region of interest" description="3 X 6 AA approximate tandem repeats of K-P-K-D-A-P">
    <location>
        <begin position="29"/>
        <end position="47"/>
    </location>
</feature>
<feature type="region of interest" description="Disordered" evidence="2">
    <location>
        <begin position="137"/>
        <end position="169"/>
    </location>
</feature>
<feature type="region of interest" description="3 X 4 AA approximate tandem repeats of K-P-P-K">
    <location>
        <begin position="156"/>
        <end position="168"/>
    </location>
</feature>
<feature type="region of interest" description="Disordered" evidence="2">
    <location>
        <begin position="206"/>
        <end position="244"/>
    </location>
</feature>
<feature type="region of interest" description="4 X 4 AA approximate tandem repeats of P-K-[PQ]-[GA]">
    <location>
        <begin position="225"/>
        <end position="240"/>
    </location>
</feature>
<feature type="compositionally biased region" description="Basic and acidic residues" evidence="2">
    <location>
        <begin position="26"/>
        <end position="86"/>
    </location>
</feature>
<feature type="compositionally biased region" description="Basic and acidic residues" evidence="2">
    <location>
        <begin position="157"/>
        <end position="169"/>
    </location>
</feature>
<feature type="compositionally biased region" description="Basic residues" evidence="2">
    <location>
        <begin position="209"/>
        <end position="224"/>
    </location>
</feature>
<feature type="compositionally biased region" description="Basic and acidic residues" evidence="2">
    <location>
        <begin position="235"/>
        <end position="244"/>
    </location>
</feature>
<feature type="sequence variant" description="In allele A:2.">
    <original>P</original>
    <variation>T</variation>
    <location>
        <position position="30"/>
    </location>
</feature>
<feature type="sequence variant" description="In allele A:2.">
    <original>P</original>
    <variation>PKPKEEP</variation>
    <location>
        <position position="40"/>
    </location>
</feature>
<feature type="sequence variant" description="In allele A:2.">
    <original>L</original>
    <variation>P</variation>
    <location>
        <position position="166"/>
    </location>
</feature>
<feature type="sequence variant" description="In allele A:2.">
    <location>
        <begin position="229"/>
        <end position="232"/>
    </location>
</feature>
<gene>
    <name type="primary">SP38-40.A</name>
</gene>
<keyword id="KW-0677">Repeat</keyword>
<keyword id="KW-0964">Secreted</keyword>
<keyword id="KW-0732">Signal</keyword>
<name>S40A_CHITE</name>